<gene>
    <name evidence="1" type="primary">hfq</name>
    <name type="ordered locus">ECSE_4469</name>
</gene>
<organism>
    <name type="scientific">Escherichia coli (strain SE11)</name>
    <dbReference type="NCBI Taxonomy" id="409438"/>
    <lineage>
        <taxon>Bacteria</taxon>
        <taxon>Pseudomonadati</taxon>
        <taxon>Pseudomonadota</taxon>
        <taxon>Gammaproteobacteria</taxon>
        <taxon>Enterobacterales</taxon>
        <taxon>Enterobacteriaceae</taxon>
        <taxon>Escherichia</taxon>
    </lineage>
</organism>
<keyword id="KW-0694">RNA-binding</keyword>
<keyword id="KW-0346">Stress response</keyword>
<dbReference type="EMBL" id="AP009240">
    <property type="protein sequence ID" value="BAG79993.1"/>
    <property type="molecule type" value="Genomic_DNA"/>
</dbReference>
<dbReference type="RefSeq" id="WP_001051883.1">
    <property type="nucleotide sequence ID" value="NC_011415.1"/>
</dbReference>
<dbReference type="SMR" id="B6I276"/>
<dbReference type="GeneID" id="93777649"/>
<dbReference type="KEGG" id="ecy:ECSE_4469"/>
<dbReference type="HOGENOM" id="CLU_113688_2_1_6"/>
<dbReference type="Proteomes" id="UP000008199">
    <property type="component" value="Chromosome"/>
</dbReference>
<dbReference type="GO" id="GO:0005829">
    <property type="term" value="C:cytosol"/>
    <property type="evidence" value="ECO:0007669"/>
    <property type="project" value="TreeGrafter"/>
</dbReference>
<dbReference type="GO" id="GO:0003723">
    <property type="term" value="F:RNA binding"/>
    <property type="evidence" value="ECO:0007669"/>
    <property type="project" value="UniProtKB-UniRule"/>
</dbReference>
<dbReference type="GO" id="GO:0006355">
    <property type="term" value="P:regulation of DNA-templated transcription"/>
    <property type="evidence" value="ECO:0007669"/>
    <property type="project" value="InterPro"/>
</dbReference>
<dbReference type="GO" id="GO:0043487">
    <property type="term" value="P:regulation of RNA stability"/>
    <property type="evidence" value="ECO:0007669"/>
    <property type="project" value="TreeGrafter"/>
</dbReference>
<dbReference type="GO" id="GO:0045974">
    <property type="term" value="P:regulation of translation, ncRNA-mediated"/>
    <property type="evidence" value="ECO:0007669"/>
    <property type="project" value="TreeGrafter"/>
</dbReference>
<dbReference type="CDD" id="cd01716">
    <property type="entry name" value="Hfq"/>
    <property type="match status" value="1"/>
</dbReference>
<dbReference type="FunFam" id="2.30.30.100:FF:000001">
    <property type="entry name" value="RNA-binding protein Hfq"/>
    <property type="match status" value="1"/>
</dbReference>
<dbReference type="Gene3D" id="2.30.30.100">
    <property type="match status" value="1"/>
</dbReference>
<dbReference type="HAMAP" id="MF_00436">
    <property type="entry name" value="Hfq"/>
    <property type="match status" value="1"/>
</dbReference>
<dbReference type="InterPro" id="IPR005001">
    <property type="entry name" value="Hfq"/>
</dbReference>
<dbReference type="InterPro" id="IPR010920">
    <property type="entry name" value="LSM_dom_sf"/>
</dbReference>
<dbReference type="InterPro" id="IPR047575">
    <property type="entry name" value="Sm"/>
</dbReference>
<dbReference type="NCBIfam" id="TIGR02383">
    <property type="entry name" value="Hfq"/>
    <property type="match status" value="1"/>
</dbReference>
<dbReference type="NCBIfam" id="NF001602">
    <property type="entry name" value="PRK00395.1"/>
    <property type="match status" value="1"/>
</dbReference>
<dbReference type="PANTHER" id="PTHR34772">
    <property type="entry name" value="RNA-BINDING PROTEIN HFQ"/>
    <property type="match status" value="1"/>
</dbReference>
<dbReference type="PANTHER" id="PTHR34772:SF1">
    <property type="entry name" value="RNA-BINDING PROTEIN HFQ"/>
    <property type="match status" value="1"/>
</dbReference>
<dbReference type="Pfam" id="PF17209">
    <property type="entry name" value="Hfq"/>
    <property type="match status" value="1"/>
</dbReference>
<dbReference type="SUPFAM" id="SSF50182">
    <property type="entry name" value="Sm-like ribonucleoproteins"/>
    <property type="match status" value="1"/>
</dbReference>
<dbReference type="PROSITE" id="PS52002">
    <property type="entry name" value="SM"/>
    <property type="match status" value="1"/>
</dbReference>
<protein>
    <recommendedName>
        <fullName evidence="1">RNA-binding protein Hfq</fullName>
    </recommendedName>
</protein>
<proteinExistence type="inferred from homology"/>
<reference key="1">
    <citation type="journal article" date="2008" name="DNA Res.">
        <title>Complete genome sequence and comparative analysis of the wild-type commensal Escherichia coli strain SE11 isolated from a healthy adult.</title>
        <authorList>
            <person name="Oshima K."/>
            <person name="Toh H."/>
            <person name="Ogura Y."/>
            <person name="Sasamoto H."/>
            <person name="Morita H."/>
            <person name="Park S.-H."/>
            <person name="Ooka T."/>
            <person name="Iyoda S."/>
            <person name="Taylor T.D."/>
            <person name="Hayashi T."/>
            <person name="Itoh K."/>
            <person name="Hattori M."/>
        </authorList>
    </citation>
    <scope>NUCLEOTIDE SEQUENCE [LARGE SCALE GENOMIC DNA]</scope>
    <source>
        <strain>SE11</strain>
    </source>
</reference>
<accession>B6I276</accession>
<comment type="function">
    <text evidence="1">RNA chaperone that binds small regulatory RNA (sRNAs) and mRNAs to facilitate mRNA translational regulation in response to envelope stress, environmental stress and changes in metabolite concentrations. Also binds with high specificity to tRNAs.</text>
</comment>
<comment type="subunit">
    <text evidence="1">Homohexamer.</text>
</comment>
<comment type="similarity">
    <text evidence="1">Belongs to the Hfq family.</text>
</comment>
<evidence type="ECO:0000255" key="1">
    <source>
        <dbReference type="HAMAP-Rule" id="MF_00436"/>
    </source>
</evidence>
<evidence type="ECO:0000255" key="2">
    <source>
        <dbReference type="PROSITE-ProRule" id="PRU01346"/>
    </source>
</evidence>
<evidence type="ECO:0000256" key="3">
    <source>
        <dbReference type="SAM" id="MobiDB-lite"/>
    </source>
</evidence>
<feature type="chain" id="PRO_1000190324" description="RNA-binding protein Hfq">
    <location>
        <begin position="1"/>
        <end position="102"/>
    </location>
</feature>
<feature type="domain" description="Sm" evidence="2">
    <location>
        <begin position="9"/>
        <end position="68"/>
    </location>
</feature>
<feature type="region of interest" description="Disordered" evidence="3">
    <location>
        <begin position="63"/>
        <end position="102"/>
    </location>
</feature>
<feature type="compositionally biased region" description="Polar residues" evidence="3">
    <location>
        <begin position="70"/>
        <end position="96"/>
    </location>
</feature>
<sequence length="102" mass="11166">MAKGQSLQDPFLNALRRERVPVSIYLVNGIKLQGQIESFDQFVILLKNTVSQMVYKHAISTVVPSRPVSHHSNNAGGGTSSNYHHGSSAQNTSAQQDSEETE</sequence>
<name>HFQ_ECOSE</name>